<sequence length="264" mass="29000">MDEATQSAIQFDVVTLFPEMFRALTDWGITSRAVKQGRFGLRTWNPRDFTTDNYRTVDDRPYGGGPGMVMLAKPLEAAIGAAKAAQAAQGVATSRVVMMSPQGAPLTHERVARMAAEPGVVLLCGRYEAIDQRLIDRCVDEELSLGDFVLSGGELPAMALMDAVVRLLPGVLNDAQSAVQDSFADGLLDCPHYTRPEEYEGVRVPDVLLGGHHAEIERWRRQEALRNTIAKRPDLIARARREKLLSRADEAWLASLAKEAKQAS</sequence>
<evidence type="ECO:0000255" key="1">
    <source>
        <dbReference type="HAMAP-Rule" id="MF_00605"/>
    </source>
</evidence>
<comment type="function">
    <text evidence="1">Specifically methylates guanosine-37 in various tRNAs.</text>
</comment>
<comment type="catalytic activity">
    <reaction evidence="1">
        <text>guanosine(37) in tRNA + S-adenosyl-L-methionine = N(1)-methylguanosine(37) in tRNA + S-adenosyl-L-homocysteine + H(+)</text>
        <dbReference type="Rhea" id="RHEA:36899"/>
        <dbReference type="Rhea" id="RHEA-COMP:10145"/>
        <dbReference type="Rhea" id="RHEA-COMP:10147"/>
        <dbReference type="ChEBI" id="CHEBI:15378"/>
        <dbReference type="ChEBI" id="CHEBI:57856"/>
        <dbReference type="ChEBI" id="CHEBI:59789"/>
        <dbReference type="ChEBI" id="CHEBI:73542"/>
        <dbReference type="ChEBI" id="CHEBI:74269"/>
        <dbReference type="EC" id="2.1.1.228"/>
    </reaction>
</comment>
<comment type="subunit">
    <text evidence="1">Homodimer.</text>
</comment>
<comment type="subcellular location">
    <subcellularLocation>
        <location evidence="1">Cytoplasm</location>
    </subcellularLocation>
</comment>
<comment type="similarity">
    <text evidence="1">Belongs to the RNA methyltransferase TrmD family.</text>
</comment>
<organism>
    <name type="scientific">Burkholderia mallei (strain NCTC 10229)</name>
    <dbReference type="NCBI Taxonomy" id="412022"/>
    <lineage>
        <taxon>Bacteria</taxon>
        <taxon>Pseudomonadati</taxon>
        <taxon>Pseudomonadota</taxon>
        <taxon>Betaproteobacteria</taxon>
        <taxon>Burkholderiales</taxon>
        <taxon>Burkholderiaceae</taxon>
        <taxon>Burkholderia</taxon>
        <taxon>pseudomallei group</taxon>
    </lineage>
</organism>
<feature type="chain" id="PRO_1000006458" description="tRNA (guanine-N(1)-)-methyltransferase">
    <location>
        <begin position="1"/>
        <end position="264"/>
    </location>
</feature>
<feature type="binding site" evidence="1">
    <location>
        <position position="125"/>
    </location>
    <ligand>
        <name>S-adenosyl-L-methionine</name>
        <dbReference type="ChEBI" id="CHEBI:59789"/>
    </ligand>
</feature>
<feature type="binding site" evidence="1">
    <location>
        <begin position="145"/>
        <end position="150"/>
    </location>
    <ligand>
        <name>S-adenosyl-L-methionine</name>
        <dbReference type="ChEBI" id="CHEBI:59789"/>
    </ligand>
</feature>
<proteinExistence type="inferred from homology"/>
<accession>A2S4N8</accession>
<dbReference type="EC" id="2.1.1.228" evidence="1"/>
<dbReference type="EMBL" id="CP000546">
    <property type="protein sequence ID" value="ABN03607.1"/>
    <property type="molecule type" value="Genomic_DNA"/>
</dbReference>
<dbReference type="RefSeq" id="WP_004189914.1">
    <property type="nucleotide sequence ID" value="NC_008836.1"/>
</dbReference>
<dbReference type="SMR" id="A2S4N8"/>
<dbReference type="GeneID" id="93061077"/>
<dbReference type="KEGG" id="bml:BMA10229_A0917"/>
<dbReference type="HOGENOM" id="CLU_047363_0_2_4"/>
<dbReference type="Proteomes" id="UP000002283">
    <property type="component" value="Chromosome I"/>
</dbReference>
<dbReference type="GO" id="GO:0005829">
    <property type="term" value="C:cytosol"/>
    <property type="evidence" value="ECO:0007669"/>
    <property type="project" value="TreeGrafter"/>
</dbReference>
<dbReference type="GO" id="GO:0052906">
    <property type="term" value="F:tRNA (guanine(37)-N1)-methyltransferase activity"/>
    <property type="evidence" value="ECO:0007669"/>
    <property type="project" value="UniProtKB-UniRule"/>
</dbReference>
<dbReference type="GO" id="GO:0002939">
    <property type="term" value="P:tRNA N1-guanine methylation"/>
    <property type="evidence" value="ECO:0007669"/>
    <property type="project" value="TreeGrafter"/>
</dbReference>
<dbReference type="CDD" id="cd18080">
    <property type="entry name" value="TrmD-like"/>
    <property type="match status" value="1"/>
</dbReference>
<dbReference type="FunFam" id="1.10.1270.20:FF:000001">
    <property type="entry name" value="tRNA (guanine-N(1)-)-methyltransferase"/>
    <property type="match status" value="1"/>
</dbReference>
<dbReference type="FunFam" id="3.40.1280.10:FF:000001">
    <property type="entry name" value="tRNA (guanine-N(1)-)-methyltransferase"/>
    <property type="match status" value="1"/>
</dbReference>
<dbReference type="Gene3D" id="3.40.1280.10">
    <property type="match status" value="1"/>
</dbReference>
<dbReference type="Gene3D" id="1.10.1270.20">
    <property type="entry name" value="tRNA(m1g37)methyltransferase, domain 2"/>
    <property type="match status" value="1"/>
</dbReference>
<dbReference type="HAMAP" id="MF_00605">
    <property type="entry name" value="TrmD"/>
    <property type="match status" value="1"/>
</dbReference>
<dbReference type="InterPro" id="IPR029028">
    <property type="entry name" value="Alpha/beta_knot_MTases"/>
</dbReference>
<dbReference type="InterPro" id="IPR023148">
    <property type="entry name" value="tRNA_m1G_MeTrfase_C_sf"/>
</dbReference>
<dbReference type="InterPro" id="IPR002649">
    <property type="entry name" value="tRNA_m1G_MeTrfase_TrmD"/>
</dbReference>
<dbReference type="InterPro" id="IPR029026">
    <property type="entry name" value="tRNA_m1G_MTases_N"/>
</dbReference>
<dbReference type="InterPro" id="IPR016009">
    <property type="entry name" value="tRNA_MeTrfase_TRMD/TRM10"/>
</dbReference>
<dbReference type="NCBIfam" id="NF000648">
    <property type="entry name" value="PRK00026.1"/>
    <property type="match status" value="1"/>
</dbReference>
<dbReference type="NCBIfam" id="TIGR00088">
    <property type="entry name" value="trmD"/>
    <property type="match status" value="1"/>
</dbReference>
<dbReference type="PANTHER" id="PTHR46417">
    <property type="entry name" value="TRNA (GUANINE-N(1)-)-METHYLTRANSFERASE"/>
    <property type="match status" value="1"/>
</dbReference>
<dbReference type="PANTHER" id="PTHR46417:SF1">
    <property type="entry name" value="TRNA (GUANINE-N(1)-)-METHYLTRANSFERASE"/>
    <property type="match status" value="1"/>
</dbReference>
<dbReference type="Pfam" id="PF01746">
    <property type="entry name" value="tRNA_m1G_MT"/>
    <property type="match status" value="1"/>
</dbReference>
<dbReference type="PIRSF" id="PIRSF000386">
    <property type="entry name" value="tRNA_mtase"/>
    <property type="match status" value="1"/>
</dbReference>
<dbReference type="SUPFAM" id="SSF75217">
    <property type="entry name" value="alpha/beta knot"/>
    <property type="match status" value="1"/>
</dbReference>
<gene>
    <name evidence="1" type="primary">trmD</name>
    <name type="ordered locus">BMA10229_A0917</name>
</gene>
<name>TRMD_BURM9</name>
<protein>
    <recommendedName>
        <fullName evidence="1">tRNA (guanine-N(1)-)-methyltransferase</fullName>
        <ecNumber evidence="1">2.1.1.228</ecNumber>
    </recommendedName>
    <alternativeName>
        <fullName evidence="1">M1G-methyltransferase</fullName>
    </alternativeName>
    <alternativeName>
        <fullName evidence="1">tRNA [GM37] methyltransferase</fullName>
    </alternativeName>
</protein>
<keyword id="KW-0963">Cytoplasm</keyword>
<keyword id="KW-0489">Methyltransferase</keyword>
<keyword id="KW-0949">S-adenosyl-L-methionine</keyword>
<keyword id="KW-0808">Transferase</keyword>
<keyword id="KW-0819">tRNA processing</keyword>
<reference key="1">
    <citation type="journal article" date="2010" name="Genome Biol. Evol.">
        <title>Continuing evolution of Burkholderia mallei through genome reduction and large-scale rearrangements.</title>
        <authorList>
            <person name="Losada L."/>
            <person name="Ronning C.M."/>
            <person name="DeShazer D."/>
            <person name="Woods D."/>
            <person name="Fedorova N."/>
            <person name="Kim H.S."/>
            <person name="Shabalina S.A."/>
            <person name="Pearson T.R."/>
            <person name="Brinkac L."/>
            <person name="Tan P."/>
            <person name="Nandi T."/>
            <person name="Crabtree J."/>
            <person name="Badger J."/>
            <person name="Beckstrom-Sternberg S."/>
            <person name="Saqib M."/>
            <person name="Schutzer S.E."/>
            <person name="Keim P."/>
            <person name="Nierman W.C."/>
        </authorList>
    </citation>
    <scope>NUCLEOTIDE SEQUENCE [LARGE SCALE GENOMIC DNA]</scope>
    <source>
        <strain>NCTC 10229</strain>
    </source>
</reference>